<feature type="chain" id="PRO_1000146764" description="Protein AaeX">
    <location>
        <begin position="1"/>
        <end position="67"/>
    </location>
</feature>
<feature type="transmembrane region" description="Helical" evidence="1">
    <location>
        <begin position="3"/>
        <end position="23"/>
    </location>
</feature>
<feature type="transmembrane region" description="Helical" evidence="1">
    <location>
        <begin position="43"/>
        <end position="63"/>
    </location>
</feature>
<sequence>MSLFPVIVVFGLSFPPIFFELLLSLAIFWLVRRMLVPTGIYDFVWHPALFNTALYCCLFYLISRLFV</sequence>
<gene>
    <name evidence="1" type="primary">aaeX</name>
    <name type="ordered locus">SNSL254_A3629</name>
</gene>
<dbReference type="EMBL" id="CP001113">
    <property type="protein sequence ID" value="ACF63808.1"/>
    <property type="molecule type" value="Genomic_DNA"/>
</dbReference>
<dbReference type="RefSeq" id="WP_000051840.1">
    <property type="nucleotide sequence ID" value="NZ_CCMR01000001.1"/>
</dbReference>
<dbReference type="SMR" id="B4T776"/>
<dbReference type="GeneID" id="45138179"/>
<dbReference type="KEGG" id="see:SNSL254_A3629"/>
<dbReference type="HOGENOM" id="CLU_188292_0_0_6"/>
<dbReference type="Proteomes" id="UP000008824">
    <property type="component" value="Chromosome"/>
</dbReference>
<dbReference type="GO" id="GO:0005886">
    <property type="term" value="C:plasma membrane"/>
    <property type="evidence" value="ECO:0007669"/>
    <property type="project" value="UniProtKB-SubCell"/>
</dbReference>
<dbReference type="HAMAP" id="MF_01546">
    <property type="entry name" value="AaeX"/>
    <property type="match status" value="1"/>
</dbReference>
<dbReference type="InterPro" id="IPR012451">
    <property type="entry name" value="DUF1656"/>
</dbReference>
<dbReference type="NCBIfam" id="NF008615">
    <property type="entry name" value="PRK11594.1"/>
    <property type="match status" value="1"/>
</dbReference>
<dbReference type="Pfam" id="PF07869">
    <property type="entry name" value="DUF1656"/>
    <property type="match status" value="1"/>
</dbReference>
<organism>
    <name type="scientific">Salmonella newport (strain SL254)</name>
    <dbReference type="NCBI Taxonomy" id="423368"/>
    <lineage>
        <taxon>Bacteria</taxon>
        <taxon>Pseudomonadati</taxon>
        <taxon>Pseudomonadota</taxon>
        <taxon>Gammaproteobacteria</taxon>
        <taxon>Enterobacterales</taxon>
        <taxon>Enterobacteriaceae</taxon>
        <taxon>Salmonella</taxon>
    </lineage>
</organism>
<name>AAEX_SALNS</name>
<comment type="subcellular location">
    <subcellularLocation>
        <location evidence="1">Cell membrane</location>
        <topology evidence="1">Multi-pass membrane protein</topology>
    </subcellularLocation>
</comment>
<comment type="similarity">
    <text evidence="1">Belongs to the AaeX family.</text>
</comment>
<accession>B4T776</accession>
<protein>
    <recommendedName>
        <fullName evidence="1">Protein AaeX</fullName>
    </recommendedName>
</protein>
<reference key="1">
    <citation type="journal article" date="2011" name="J. Bacteriol.">
        <title>Comparative genomics of 28 Salmonella enterica isolates: evidence for CRISPR-mediated adaptive sublineage evolution.</title>
        <authorList>
            <person name="Fricke W.F."/>
            <person name="Mammel M.K."/>
            <person name="McDermott P.F."/>
            <person name="Tartera C."/>
            <person name="White D.G."/>
            <person name="Leclerc J.E."/>
            <person name="Ravel J."/>
            <person name="Cebula T.A."/>
        </authorList>
    </citation>
    <scope>NUCLEOTIDE SEQUENCE [LARGE SCALE GENOMIC DNA]</scope>
    <source>
        <strain>SL254</strain>
    </source>
</reference>
<evidence type="ECO:0000255" key="1">
    <source>
        <dbReference type="HAMAP-Rule" id="MF_01546"/>
    </source>
</evidence>
<proteinExistence type="inferred from homology"/>
<keyword id="KW-1003">Cell membrane</keyword>
<keyword id="KW-0472">Membrane</keyword>
<keyword id="KW-0812">Transmembrane</keyword>
<keyword id="KW-1133">Transmembrane helix</keyword>